<keyword id="KW-0687">Ribonucleoprotein</keyword>
<keyword id="KW-0689">Ribosomal protein</keyword>
<keyword id="KW-0694">RNA-binding</keyword>
<keyword id="KW-0699">rRNA-binding</keyword>
<reference key="1">
    <citation type="submission" date="2008-06" db="EMBL/GenBank/DDBJ databases">
        <title>Complete sequence of Chlorobium phaeobacteroides BS1.</title>
        <authorList>
            <consortium name="US DOE Joint Genome Institute"/>
            <person name="Lucas S."/>
            <person name="Copeland A."/>
            <person name="Lapidus A."/>
            <person name="Glavina del Rio T."/>
            <person name="Dalin E."/>
            <person name="Tice H."/>
            <person name="Bruce D."/>
            <person name="Goodwin L."/>
            <person name="Pitluck S."/>
            <person name="Schmutz J."/>
            <person name="Larimer F."/>
            <person name="Land M."/>
            <person name="Hauser L."/>
            <person name="Kyrpides N."/>
            <person name="Ovchinnikova G."/>
            <person name="Li T."/>
            <person name="Liu Z."/>
            <person name="Zhao F."/>
            <person name="Overmann J."/>
            <person name="Bryant D.A."/>
            <person name="Richardson P."/>
        </authorList>
    </citation>
    <scope>NUCLEOTIDE SEQUENCE [LARGE SCALE GENOMIC DNA]</scope>
    <source>
        <strain>BS1</strain>
    </source>
</reference>
<evidence type="ECO:0000255" key="1">
    <source>
        <dbReference type="HAMAP-Rule" id="MF_01306"/>
    </source>
</evidence>
<evidence type="ECO:0000305" key="2"/>
<feature type="chain" id="PRO_1000140705" description="Small ribosomal subunit protein uS4">
    <location>
        <begin position="1"/>
        <end position="203"/>
    </location>
</feature>
<feature type="domain" description="S4 RNA-binding" evidence="1">
    <location>
        <begin position="93"/>
        <end position="153"/>
    </location>
</feature>
<organism>
    <name type="scientific">Chlorobium phaeobacteroides (strain BS1)</name>
    <dbReference type="NCBI Taxonomy" id="331678"/>
    <lineage>
        <taxon>Bacteria</taxon>
        <taxon>Pseudomonadati</taxon>
        <taxon>Chlorobiota</taxon>
        <taxon>Chlorobiia</taxon>
        <taxon>Chlorobiales</taxon>
        <taxon>Chlorobiaceae</taxon>
        <taxon>Chlorobium/Pelodictyon group</taxon>
        <taxon>Chlorobium</taxon>
    </lineage>
</organism>
<comment type="function">
    <text evidence="1">One of the primary rRNA binding proteins, it binds directly to 16S rRNA where it nucleates assembly of the body of the 30S subunit.</text>
</comment>
<comment type="function">
    <text evidence="1">With S5 and S12 plays an important role in translational accuracy.</text>
</comment>
<comment type="subunit">
    <text evidence="1">Part of the 30S ribosomal subunit. Contacts protein S5. The interaction surface between S4 and S5 is involved in control of translational fidelity.</text>
</comment>
<comment type="similarity">
    <text evidence="1">Belongs to the universal ribosomal protein uS4 family.</text>
</comment>
<dbReference type="EMBL" id="CP001101">
    <property type="protein sequence ID" value="ACE05174.1"/>
    <property type="molecule type" value="Genomic_DNA"/>
</dbReference>
<dbReference type="SMR" id="B3EP35"/>
<dbReference type="STRING" id="331678.Cphamn1_2270"/>
<dbReference type="KEGG" id="cpb:Cphamn1_2270"/>
<dbReference type="eggNOG" id="COG0522">
    <property type="taxonomic scope" value="Bacteria"/>
</dbReference>
<dbReference type="HOGENOM" id="CLU_092403_0_2_10"/>
<dbReference type="OrthoDB" id="9803672at2"/>
<dbReference type="GO" id="GO:0015935">
    <property type="term" value="C:small ribosomal subunit"/>
    <property type="evidence" value="ECO:0007669"/>
    <property type="project" value="InterPro"/>
</dbReference>
<dbReference type="GO" id="GO:0019843">
    <property type="term" value="F:rRNA binding"/>
    <property type="evidence" value="ECO:0007669"/>
    <property type="project" value="UniProtKB-UniRule"/>
</dbReference>
<dbReference type="GO" id="GO:0003735">
    <property type="term" value="F:structural constituent of ribosome"/>
    <property type="evidence" value="ECO:0007669"/>
    <property type="project" value="InterPro"/>
</dbReference>
<dbReference type="GO" id="GO:0042274">
    <property type="term" value="P:ribosomal small subunit biogenesis"/>
    <property type="evidence" value="ECO:0007669"/>
    <property type="project" value="TreeGrafter"/>
</dbReference>
<dbReference type="GO" id="GO:0006412">
    <property type="term" value="P:translation"/>
    <property type="evidence" value="ECO:0007669"/>
    <property type="project" value="UniProtKB-UniRule"/>
</dbReference>
<dbReference type="CDD" id="cd00165">
    <property type="entry name" value="S4"/>
    <property type="match status" value="1"/>
</dbReference>
<dbReference type="FunFam" id="3.10.290.10:FF:000001">
    <property type="entry name" value="30S ribosomal protein S4"/>
    <property type="match status" value="1"/>
</dbReference>
<dbReference type="Gene3D" id="1.10.1050.10">
    <property type="entry name" value="Ribosomal Protein S4 Delta 41, Chain A, domain 1"/>
    <property type="match status" value="1"/>
</dbReference>
<dbReference type="Gene3D" id="3.10.290.10">
    <property type="entry name" value="RNA-binding S4 domain"/>
    <property type="match status" value="1"/>
</dbReference>
<dbReference type="HAMAP" id="MF_01306_B">
    <property type="entry name" value="Ribosomal_uS4_B"/>
    <property type="match status" value="1"/>
</dbReference>
<dbReference type="InterPro" id="IPR022801">
    <property type="entry name" value="Ribosomal_uS4"/>
</dbReference>
<dbReference type="InterPro" id="IPR005709">
    <property type="entry name" value="Ribosomal_uS4_bac-type"/>
</dbReference>
<dbReference type="InterPro" id="IPR001912">
    <property type="entry name" value="Ribosomal_uS4_N"/>
</dbReference>
<dbReference type="InterPro" id="IPR002942">
    <property type="entry name" value="S4_RNA-bd"/>
</dbReference>
<dbReference type="InterPro" id="IPR036986">
    <property type="entry name" value="S4_RNA-bd_sf"/>
</dbReference>
<dbReference type="NCBIfam" id="NF003717">
    <property type="entry name" value="PRK05327.1"/>
    <property type="match status" value="1"/>
</dbReference>
<dbReference type="NCBIfam" id="TIGR01017">
    <property type="entry name" value="rpsD_bact"/>
    <property type="match status" value="1"/>
</dbReference>
<dbReference type="PANTHER" id="PTHR11831">
    <property type="entry name" value="30S 40S RIBOSOMAL PROTEIN"/>
    <property type="match status" value="1"/>
</dbReference>
<dbReference type="PANTHER" id="PTHR11831:SF4">
    <property type="entry name" value="SMALL RIBOSOMAL SUBUNIT PROTEIN US4M"/>
    <property type="match status" value="1"/>
</dbReference>
<dbReference type="Pfam" id="PF00163">
    <property type="entry name" value="Ribosomal_S4"/>
    <property type="match status" value="1"/>
</dbReference>
<dbReference type="Pfam" id="PF01479">
    <property type="entry name" value="S4"/>
    <property type="match status" value="1"/>
</dbReference>
<dbReference type="SMART" id="SM01390">
    <property type="entry name" value="Ribosomal_S4"/>
    <property type="match status" value="1"/>
</dbReference>
<dbReference type="SMART" id="SM00363">
    <property type="entry name" value="S4"/>
    <property type="match status" value="1"/>
</dbReference>
<dbReference type="SUPFAM" id="SSF55174">
    <property type="entry name" value="Alpha-L RNA-binding motif"/>
    <property type="match status" value="1"/>
</dbReference>
<dbReference type="PROSITE" id="PS50889">
    <property type="entry name" value="S4"/>
    <property type="match status" value="1"/>
</dbReference>
<proteinExistence type="inferred from homology"/>
<sequence>MARFRGSITKVSRRLGVALSPKAEKYLEKRPYAPGEHGQSRRGKVSEYALQLREKQKMKYLYGVLEKQFRNYYKKAVSQRGITGDNLVKLLERRFDNVVFRAGFSPSRAGARQLVTHGHLLINGKKVDIPSYLLKPGDAMEFRQKSQNLDAVADSMNRAPDSRIPSWIQVDKAHKKAVFLAVPEREEVQEPFNEQLVVELYSK</sequence>
<accession>B3EP35</accession>
<name>RS4_CHLPB</name>
<gene>
    <name evidence="1" type="primary">rpsD</name>
    <name type="ordered locus">Cphamn1_2270</name>
</gene>
<protein>
    <recommendedName>
        <fullName evidence="1">Small ribosomal subunit protein uS4</fullName>
    </recommendedName>
    <alternativeName>
        <fullName evidence="2">30S ribosomal protein S4</fullName>
    </alternativeName>
</protein>